<sequence>MSTAETPQQPQQQQKLRWGIAWIYSSSNNTIITITDLTGAETVARVSGGMVVRADKDKPSPWAAMQAAYKAAQLALARGINAVHIKVRGPGGYGMKVPGPGASAAIRALARSGLVIGRIEDVTPIPHDTIRPPSGRKGRRV</sequence>
<protein>
    <recommendedName>
        <fullName evidence="1">Small ribosomal subunit protein uS11</fullName>
    </recommendedName>
    <alternativeName>
        <fullName evidence="2">30S ribosomal protein S11</fullName>
    </alternativeName>
</protein>
<evidence type="ECO:0000255" key="1">
    <source>
        <dbReference type="HAMAP-Rule" id="MF_01310"/>
    </source>
</evidence>
<evidence type="ECO:0000305" key="2"/>
<accession>A3MX63</accession>
<name>RS11_PYRCJ</name>
<reference key="1">
    <citation type="submission" date="2007-02" db="EMBL/GenBank/DDBJ databases">
        <title>Complete sequence of Pyrobaculum calidifontis JCM 11548.</title>
        <authorList>
            <consortium name="US DOE Joint Genome Institute"/>
            <person name="Copeland A."/>
            <person name="Lucas S."/>
            <person name="Lapidus A."/>
            <person name="Barry K."/>
            <person name="Glavina del Rio T."/>
            <person name="Dalin E."/>
            <person name="Tice H."/>
            <person name="Pitluck S."/>
            <person name="Chain P."/>
            <person name="Malfatti S."/>
            <person name="Shin M."/>
            <person name="Vergez L."/>
            <person name="Schmutz J."/>
            <person name="Larimer F."/>
            <person name="Land M."/>
            <person name="Hauser L."/>
            <person name="Kyrpides N."/>
            <person name="Mikhailova N."/>
            <person name="Cozen A.E."/>
            <person name="Fitz-Gibbon S.T."/>
            <person name="House C.H."/>
            <person name="Saltikov C."/>
            <person name="Lowe T.M."/>
            <person name="Richardson P."/>
        </authorList>
    </citation>
    <scope>NUCLEOTIDE SEQUENCE [LARGE SCALE GENOMIC DNA]</scope>
    <source>
        <strain>DSM 21063 / JCM 11548 / VA1</strain>
    </source>
</reference>
<keyword id="KW-0002">3D-structure</keyword>
<keyword id="KW-0687">Ribonucleoprotein</keyword>
<keyword id="KW-0689">Ribosomal protein</keyword>
<keyword id="KW-0694">RNA-binding</keyword>
<keyword id="KW-0699">rRNA-binding</keyword>
<proteinExistence type="evidence at protein level"/>
<gene>
    <name evidence="1" type="primary">rps11</name>
    <name type="ordered locus">Pcal_1813</name>
</gene>
<dbReference type="EMBL" id="CP000561">
    <property type="protein sequence ID" value="ABO09230.1"/>
    <property type="molecule type" value="Genomic_DNA"/>
</dbReference>
<dbReference type="RefSeq" id="WP_011850489.1">
    <property type="nucleotide sequence ID" value="NC_009073.1"/>
</dbReference>
<dbReference type="PDB" id="9E71">
    <property type="method" value="EM"/>
    <property type="resolution" value="2.36 A"/>
    <property type="chains" value="BM=1-141"/>
</dbReference>
<dbReference type="PDB" id="9E7F">
    <property type="method" value="EM"/>
    <property type="resolution" value="2.53 A"/>
    <property type="chains" value="BM=1-141"/>
</dbReference>
<dbReference type="PDBsum" id="9E71"/>
<dbReference type="PDBsum" id="9E7F"/>
<dbReference type="EMDB" id="EMD-47628"/>
<dbReference type="EMDB" id="EMD-47668"/>
<dbReference type="SMR" id="A3MX63"/>
<dbReference type="STRING" id="410359.Pcal_1813"/>
<dbReference type="GeneID" id="4908135"/>
<dbReference type="KEGG" id="pcl:Pcal_1813"/>
<dbReference type="eggNOG" id="arCOG04240">
    <property type="taxonomic scope" value="Archaea"/>
</dbReference>
<dbReference type="HOGENOM" id="CLU_072439_6_1_2"/>
<dbReference type="OrthoDB" id="12054at2157"/>
<dbReference type="Proteomes" id="UP000001431">
    <property type="component" value="Chromosome"/>
</dbReference>
<dbReference type="GO" id="GO:1990904">
    <property type="term" value="C:ribonucleoprotein complex"/>
    <property type="evidence" value="ECO:0007669"/>
    <property type="project" value="UniProtKB-KW"/>
</dbReference>
<dbReference type="GO" id="GO:0005840">
    <property type="term" value="C:ribosome"/>
    <property type="evidence" value="ECO:0007669"/>
    <property type="project" value="UniProtKB-KW"/>
</dbReference>
<dbReference type="GO" id="GO:0019843">
    <property type="term" value="F:rRNA binding"/>
    <property type="evidence" value="ECO:0007669"/>
    <property type="project" value="UniProtKB-UniRule"/>
</dbReference>
<dbReference type="GO" id="GO:0003735">
    <property type="term" value="F:structural constituent of ribosome"/>
    <property type="evidence" value="ECO:0007669"/>
    <property type="project" value="InterPro"/>
</dbReference>
<dbReference type="GO" id="GO:0006412">
    <property type="term" value="P:translation"/>
    <property type="evidence" value="ECO:0007669"/>
    <property type="project" value="UniProtKB-UniRule"/>
</dbReference>
<dbReference type="FunFam" id="3.30.420.80:FF:000007">
    <property type="entry name" value="30S ribosomal protein S11"/>
    <property type="match status" value="1"/>
</dbReference>
<dbReference type="Gene3D" id="3.30.420.80">
    <property type="entry name" value="Ribosomal protein S11"/>
    <property type="match status" value="1"/>
</dbReference>
<dbReference type="HAMAP" id="MF_01310">
    <property type="entry name" value="Ribosomal_uS11"/>
    <property type="match status" value="1"/>
</dbReference>
<dbReference type="InterPro" id="IPR001971">
    <property type="entry name" value="Ribosomal_uS11"/>
</dbReference>
<dbReference type="InterPro" id="IPR019961">
    <property type="entry name" value="Ribosomal_uS11_archaeal"/>
</dbReference>
<dbReference type="InterPro" id="IPR018102">
    <property type="entry name" value="Ribosomal_uS11_CS"/>
</dbReference>
<dbReference type="InterPro" id="IPR036967">
    <property type="entry name" value="Ribosomal_uS11_sf"/>
</dbReference>
<dbReference type="NCBIfam" id="TIGR03628">
    <property type="entry name" value="arch_S11P"/>
    <property type="match status" value="1"/>
</dbReference>
<dbReference type="NCBIfam" id="NF007176">
    <property type="entry name" value="PRK09607.1"/>
    <property type="match status" value="1"/>
</dbReference>
<dbReference type="PANTHER" id="PTHR11759">
    <property type="entry name" value="40S RIBOSOMAL PROTEIN S14/30S RIBOSOMAL PROTEIN S11"/>
    <property type="match status" value="1"/>
</dbReference>
<dbReference type="Pfam" id="PF00411">
    <property type="entry name" value="Ribosomal_S11"/>
    <property type="match status" value="1"/>
</dbReference>
<dbReference type="PIRSF" id="PIRSF002131">
    <property type="entry name" value="Ribosomal_S11"/>
    <property type="match status" value="1"/>
</dbReference>
<dbReference type="SUPFAM" id="SSF53137">
    <property type="entry name" value="Translational machinery components"/>
    <property type="match status" value="1"/>
</dbReference>
<dbReference type="PROSITE" id="PS00054">
    <property type="entry name" value="RIBOSOMAL_S11"/>
    <property type="match status" value="1"/>
</dbReference>
<comment type="function">
    <text evidence="1">Located on the platform of the 30S subunit.</text>
</comment>
<comment type="subunit">
    <text evidence="1">Part of the 30S ribosomal subunit.</text>
</comment>
<comment type="similarity">
    <text evidence="1">Belongs to the universal ribosomal protein uS11 family.</text>
</comment>
<organism>
    <name type="scientific">Pyrobaculum calidifontis (strain DSM 21063 / JCM 11548 / VA1)</name>
    <dbReference type="NCBI Taxonomy" id="410359"/>
    <lineage>
        <taxon>Archaea</taxon>
        <taxon>Thermoproteota</taxon>
        <taxon>Thermoprotei</taxon>
        <taxon>Thermoproteales</taxon>
        <taxon>Thermoproteaceae</taxon>
        <taxon>Pyrobaculum</taxon>
    </lineage>
</organism>
<feature type="chain" id="PRO_0000294903" description="Small ribosomal subunit protein uS11">
    <location>
        <begin position="1"/>
        <end position="141"/>
    </location>
</feature>